<sequence>MATIKDVAKHAGVSTTTVSHVINKTRFVAENTKAAVWAAIKELHYSPSAVARSLKVNHTKSIGLLATSSEAPYFAEVIEAVENSCYSKGYTLILCNSHNNLDKQKAYLAMLAQKRVDGLLVMCSEYPDQLLGMLEDYRNIPMVVMDWGTARGDFTDSIIDNAFEGGYLAGRYLIERGHRDIGAIPGQLARNTGGGRHQGFLKALEEANIPVREEWIVQGDFEPESGYKAMHQILTQKHRPTAVFCGGDIMAMGAICAADELGLRVPQDISVIGYDNVRNARYFSPALTTIHQPKERLGETAFAMLLDRIVSKREDPQTIEVHPKLVERRSVADGPFRDYRR</sequence>
<organism>
    <name type="scientific">Yersinia pestis</name>
    <dbReference type="NCBI Taxonomy" id="632"/>
    <lineage>
        <taxon>Bacteria</taxon>
        <taxon>Pseudomonadati</taxon>
        <taxon>Pseudomonadota</taxon>
        <taxon>Gammaproteobacteria</taxon>
        <taxon>Enterobacterales</taxon>
        <taxon>Yersiniaceae</taxon>
        <taxon>Yersinia</taxon>
    </lineage>
</organism>
<comment type="function">
    <text evidence="1">Is the main repressor of the genes involved in the de novo synthesis of purine nucleotides, regulating purB, purC, purEK, purF, purHD, purL, purMN and guaBA expression. PurR is allosterically activated to bind its cognate DNA by binding the purine corepressors, hypoxanthine or guanine, thereby effecting transcription repression.</text>
</comment>
<comment type="pathway">
    <text>Purine metabolism; purine nucleotide biosynthesis [regulation].</text>
</comment>
<comment type="subunit">
    <text evidence="1">Homodimer.</text>
</comment>
<comment type="domain">
    <text evidence="1">Consists of two structural and functional domains: an N-terminal DNA-binding domain, approximately the first 60 residues, and a larger C-terminal domain, approximately 280 residues, which imparts the function of corepressor binding and oligomerization.</text>
</comment>
<gene>
    <name evidence="1" type="primary">purR</name>
    <name type="ordered locus">YPO2387</name>
    <name type="ordered locus">y1950</name>
    <name type="ordered locus">YP_2173</name>
</gene>
<protein>
    <recommendedName>
        <fullName evidence="1">HTH-type transcriptional repressor PurR</fullName>
    </recommendedName>
    <alternativeName>
        <fullName evidence="1">Pur regulon repressor</fullName>
    </alternativeName>
    <alternativeName>
        <fullName evidence="1">Purine nucleotide synthesis repressor</fullName>
    </alternativeName>
</protein>
<feature type="chain" id="PRO_0000279677" description="HTH-type transcriptional repressor PurR">
    <location>
        <begin position="1"/>
        <end position="341"/>
    </location>
</feature>
<feature type="domain" description="HTH lacI-type" evidence="1">
    <location>
        <begin position="2"/>
        <end position="56"/>
    </location>
</feature>
<feature type="DNA-binding region" description="H-T-H motif" evidence="1">
    <location>
        <begin position="4"/>
        <end position="23"/>
    </location>
</feature>
<feature type="DNA-binding region" evidence="1">
    <location>
        <begin position="48"/>
        <end position="56"/>
    </location>
</feature>
<feature type="binding site" evidence="1">
    <location>
        <position position="73"/>
    </location>
    <ligand>
        <name>hypoxanthine</name>
        <dbReference type="ChEBI" id="CHEBI:17368"/>
    </ligand>
</feature>
<feature type="binding site" evidence="1">
    <location>
        <position position="190"/>
    </location>
    <ligand>
        <name>hypoxanthine</name>
        <dbReference type="ChEBI" id="CHEBI:17368"/>
    </ligand>
</feature>
<feature type="binding site" evidence="1">
    <location>
        <position position="192"/>
    </location>
    <ligand>
        <name>hypoxanthine</name>
        <dbReference type="ChEBI" id="CHEBI:17368"/>
    </ligand>
</feature>
<feature type="binding site" evidence="1">
    <location>
        <position position="221"/>
    </location>
    <ligand>
        <name>hypoxanthine</name>
        <dbReference type="ChEBI" id="CHEBI:17368"/>
    </ligand>
</feature>
<feature type="binding site" evidence="1">
    <location>
        <position position="275"/>
    </location>
    <ligand>
        <name>hypoxanthine</name>
        <dbReference type="ChEBI" id="CHEBI:17368"/>
    </ligand>
</feature>
<name>PURR_YERPE</name>
<reference key="1">
    <citation type="journal article" date="2001" name="Nature">
        <title>Genome sequence of Yersinia pestis, the causative agent of plague.</title>
        <authorList>
            <person name="Parkhill J."/>
            <person name="Wren B.W."/>
            <person name="Thomson N.R."/>
            <person name="Titball R.W."/>
            <person name="Holden M.T.G."/>
            <person name="Prentice M.B."/>
            <person name="Sebaihia M."/>
            <person name="James K.D."/>
            <person name="Churcher C.M."/>
            <person name="Mungall K.L."/>
            <person name="Baker S."/>
            <person name="Basham D."/>
            <person name="Bentley S.D."/>
            <person name="Brooks K."/>
            <person name="Cerdeno-Tarraga A.-M."/>
            <person name="Chillingworth T."/>
            <person name="Cronin A."/>
            <person name="Davies R.M."/>
            <person name="Davis P."/>
            <person name="Dougan G."/>
            <person name="Feltwell T."/>
            <person name="Hamlin N."/>
            <person name="Holroyd S."/>
            <person name="Jagels K."/>
            <person name="Karlyshev A.V."/>
            <person name="Leather S."/>
            <person name="Moule S."/>
            <person name="Oyston P.C.F."/>
            <person name="Quail M.A."/>
            <person name="Rutherford K.M."/>
            <person name="Simmonds M."/>
            <person name="Skelton J."/>
            <person name="Stevens K."/>
            <person name="Whitehead S."/>
            <person name="Barrell B.G."/>
        </authorList>
    </citation>
    <scope>NUCLEOTIDE SEQUENCE [LARGE SCALE GENOMIC DNA]</scope>
    <source>
        <strain>CO-92 / Biovar Orientalis</strain>
    </source>
</reference>
<reference key="2">
    <citation type="journal article" date="2002" name="J. Bacteriol.">
        <title>Genome sequence of Yersinia pestis KIM.</title>
        <authorList>
            <person name="Deng W."/>
            <person name="Burland V."/>
            <person name="Plunkett G. III"/>
            <person name="Boutin A."/>
            <person name="Mayhew G.F."/>
            <person name="Liss P."/>
            <person name="Perna N.T."/>
            <person name="Rose D.J."/>
            <person name="Mau B."/>
            <person name="Zhou S."/>
            <person name="Schwartz D.C."/>
            <person name="Fetherston J.D."/>
            <person name="Lindler L.E."/>
            <person name="Brubaker R.R."/>
            <person name="Plano G.V."/>
            <person name="Straley S.C."/>
            <person name="McDonough K.A."/>
            <person name="Nilles M.L."/>
            <person name="Matson J.S."/>
            <person name="Blattner F.R."/>
            <person name="Perry R.D."/>
        </authorList>
    </citation>
    <scope>NUCLEOTIDE SEQUENCE [LARGE SCALE GENOMIC DNA]</scope>
    <source>
        <strain>KIM10+ / Biovar Mediaevalis</strain>
    </source>
</reference>
<reference key="3">
    <citation type="journal article" date="2004" name="DNA Res.">
        <title>Complete genome sequence of Yersinia pestis strain 91001, an isolate avirulent to humans.</title>
        <authorList>
            <person name="Song Y."/>
            <person name="Tong Z."/>
            <person name="Wang J."/>
            <person name="Wang L."/>
            <person name="Guo Z."/>
            <person name="Han Y."/>
            <person name="Zhang J."/>
            <person name="Pei D."/>
            <person name="Zhou D."/>
            <person name="Qin H."/>
            <person name="Pang X."/>
            <person name="Han Y."/>
            <person name="Zhai J."/>
            <person name="Li M."/>
            <person name="Cui B."/>
            <person name="Qi Z."/>
            <person name="Jin L."/>
            <person name="Dai R."/>
            <person name="Chen F."/>
            <person name="Li S."/>
            <person name="Ye C."/>
            <person name="Du Z."/>
            <person name="Lin W."/>
            <person name="Wang J."/>
            <person name="Yu J."/>
            <person name="Yang H."/>
            <person name="Wang J."/>
            <person name="Huang P."/>
            <person name="Yang R."/>
        </authorList>
    </citation>
    <scope>NUCLEOTIDE SEQUENCE [LARGE SCALE GENOMIC DNA]</scope>
    <source>
        <strain>91001 / Biovar Mediaevalis</strain>
    </source>
</reference>
<accession>Q7CIS2</accession>
<accession>Q74TI4</accession>
<evidence type="ECO:0000255" key="1">
    <source>
        <dbReference type="HAMAP-Rule" id="MF_01277"/>
    </source>
</evidence>
<dbReference type="EMBL" id="AL590842">
    <property type="protein sequence ID" value="CAL21015.1"/>
    <property type="molecule type" value="Genomic_DNA"/>
</dbReference>
<dbReference type="EMBL" id="AE009952">
    <property type="protein sequence ID" value="AAM85516.1"/>
    <property type="molecule type" value="Genomic_DNA"/>
</dbReference>
<dbReference type="EMBL" id="AE017042">
    <property type="protein sequence ID" value="AAS62381.1"/>
    <property type="molecule type" value="Genomic_DNA"/>
</dbReference>
<dbReference type="PIR" id="AD0291">
    <property type="entry name" value="AD0291"/>
</dbReference>
<dbReference type="RefSeq" id="WP_002210943.1">
    <property type="nucleotide sequence ID" value="NZ_WUCM01000049.1"/>
</dbReference>
<dbReference type="RefSeq" id="YP_002347353.1">
    <property type="nucleotide sequence ID" value="NC_003143.1"/>
</dbReference>
<dbReference type="SMR" id="Q7CIS2"/>
<dbReference type="IntAct" id="Q7CIS2">
    <property type="interactions" value="3"/>
</dbReference>
<dbReference type="STRING" id="214092.YPO2387"/>
<dbReference type="PaxDb" id="214092-YPO2387"/>
<dbReference type="DNASU" id="1146897"/>
<dbReference type="EnsemblBacteria" id="AAS62381">
    <property type="protein sequence ID" value="AAS62381"/>
    <property type="gene ID" value="YP_2173"/>
</dbReference>
<dbReference type="GeneID" id="57976289"/>
<dbReference type="KEGG" id="ype:YPO2387"/>
<dbReference type="KEGG" id="ypk:y1950"/>
<dbReference type="KEGG" id="ypm:YP_2173"/>
<dbReference type="PATRIC" id="fig|214092.21.peg.2794"/>
<dbReference type="eggNOG" id="COG1609">
    <property type="taxonomic scope" value="Bacteria"/>
</dbReference>
<dbReference type="HOGENOM" id="CLU_037628_6_2_6"/>
<dbReference type="OMA" id="ARWVGPP"/>
<dbReference type="OrthoDB" id="9798934at2"/>
<dbReference type="UniPathway" id="UPA00488"/>
<dbReference type="Proteomes" id="UP000000815">
    <property type="component" value="Chromosome"/>
</dbReference>
<dbReference type="Proteomes" id="UP000001019">
    <property type="component" value="Chromosome"/>
</dbReference>
<dbReference type="Proteomes" id="UP000002490">
    <property type="component" value="Chromosome"/>
</dbReference>
<dbReference type="GO" id="GO:0003700">
    <property type="term" value="F:DNA-binding transcription factor activity"/>
    <property type="evidence" value="ECO:0000318"/>
    <property type="project" value="GO_Central"/>
</dbReference>
<dbReference type="GO" id="GO:0000976">
    <property type="term" value="F:transcription cis-regulatory region binding"/>
    <property type="evidence" value="ECO:0000318"/>
    <property type="project" value="GO_Central"/>
</dbReference>
<dbReference type="GO" id="GO:0045892">
    <property type="term" value="P:negative regulation of DNA-templated transcription"/>
    <property type="evidence" value="ECO:0007669"/>
    <property type="project" value="UniProtKB-UniRule"/>
</dbReference>
<dbReference type="GO" id="GO:0006164">
    <property type="term" value="P:purine nucleotide biosynthetic process"/>
    <property type="evidence" value="ECO:0007669"/>
    <property type="project" value="UniProtKB-UniPathway"/>
</dbReference>
<dbReference type="GO" id="GO:0006355">
    <property type="term" value="P:regulation of DNA-templated transcription"/>
    <property type="evidence" value="ECO:0000318"/>
    <property type="project" value="GO_Central"/>
</dbReference>
<dbReference type="CDD" id="cd01392">
    <property type="entry name" value="HTH_LacI"/>
    <property type="match status" value="1"/>
</dbReference>
<dbReference type="CDD" id="cd06275">
    <property type="entry name" value="PBP1_PurR"/>
    <property type="match status" value="1"/>
</dbReference>
<dbReference type="FunFam" id="1.10.260.40:FF:000002">
    <property type="entry name" value="HTH-type transcriptional repressor PurR"/>
    <property type="match status" value="1"/>
</dbReference>
<dbReference type="FunFam" id="3.40.50.2300:FF:000045">
    <property type="entry name" value="HTH-type transcriptional repressor PurR"/>
    <property type="match status" value="1"/>
</dbReference>
<dbReference type="Gene3D" id="3.40.50.2300">
    <property type="match status" value="2"/>
</dbReference>
<dbReference type="Gene3D" id="1.10.260.40">
    <property type="entry name" value="lambda repressor-like DNA-binding domains"/>
    <property type="match status" value="1"/>
</dbReference>
<dbReference type="HAMAP" id="MF_01277">
    <property type="entry name" value="HTH_type_PurR"/>
    <property type="match status" value="1"/>
</dbReference>
<dbReference type="InterPro" id="IPR000843">
    <property type="entry name" value="HTH_LacI"/>
</dbReference>
<dbReference type="InterPro" id="IPR046335">
    <property type="entry name" value="LacI/GalR-like_sensor"/>
</dbReference>
<dbReference type="InterPro" id="IPR010982">
    <property type="entry name" value="Lambda_DNA-bd_dom_sf"/>
</dbReference>
<dbReference type="InterPro" id="IPR028082">
    <property type="entry name" value="Peripla_BP_I"/>
</dbReference>
<dbReference type="InterPro" id="IPR023588">
    <property type="entry name" value="Tscrpt_reg_HTH_PurR"/>
</dbReference>
<dbReference type="NCBIfam" id="NF007979">
    <property type="entry name" value="PRK10703.1"/>
    <property type="match status" value="1"/>
</dbReference>
<dbReference type="PANTHER" id="PTHR30146:SF148">
    <property type="entry name" value="HTH-TYPE TRANSCRIPTIONAL REPRESSOR PURR-RELATED"/>
    <property type="match status" value="1"/>
</dbReference>
<dbReference type="PANTHER" id="PTHR30146">
    <property type="entry name" value="LACI-RELATED TRANSCRIPTIONAL REPRESSOR"/>
    <property type="match status" value="1"/>
</dbReference>
<dbReference type="Pfam" id="PF00356">
    <property type="entry name" value="LacI"/>
    <property type="match status" value="1"/>
</dbReference>
<dbReference type="Pfam" id="PF13377">
    <property type="entry name" value="Peripla_BP_3"/>
    <property type="match status" value="1"/>
</dbReference>
<dbReference type="PRINTS" id="PR00036">
    <property type="entry name" value="HTHLACI"/>
</dbReference>
<dbReference type="SMART" id="SM00354">
    <property type="entry name" value="HTH_LACI"/>
    <property type="match status" value="1"/>
</dbReference>
<dbReference type="SUPFAM" id="SSF47413">
    <property type="entry name" value="lambda repressor-like DNA-binding domains"/>
    <property type="match status" value="1"/>
</dbReference>
<dbReference type="SUPFAM" id="SSF53822">
    <property type="entry name" value="Periplasmic binding protein-like I"/>
    <property type="match status" value="1"/>
</dbReference>
<dbReference type="PROSITE" id="PS00356">
    <property type="entry name" value="HTH_LACI_1"/>
    <property type="match status" value="1"/>
</dbReference>
<dbReference type="PROSITE" id="PS50932">
    <property type="entry name" value="HTH_LACI_2"/>
    <property type="match status" value="1"/>
</dbReference>
<proteinExistence type="inferred from homology"/>
<keyword id="KW-0238">DNA-binding</keyword>
<keyword id="KW-0658">Purine biosynthesis</keyword>
<keyword id="KW-1185">Reference proteome</keyword>
<keyword id="KW-0678">Repressor</keyword>
<keyword id="KW-0804">Transcription</keyword>
<keyword id="KW-0805">Transcription regulation</keyword>